<keyword id="KW-0131">Cell cycle</keyword>
<keyword id="KW-0132">Cell division</keyword>
<keyword id="KW-1003">Cell membrane</keyword>
<keyword id="KW-0133">Cell shape</keyword>
<keyword id="KW-0961">Cell wall biogenesis/degradation</keyword>
<keyword id="KW-0460">Magnesium</keyword>
<keyword id="KW-0472">Membrane</keyword>
<keyword id="KW-0479">Metal-binding</keyword>
<keyword id="KW-0573">Peptidoglycan synthesis</keyword>
<keyword id="KW-1185">Reference proteome</keyword>
<keyword id="KW-0808">Transferase</keyword>
<keyword id="KW-0812">Transmembrane</keyword>
<keyword id="KW-1133">Transmembrane helix</keyword>
<sequence>MIAILLAVAFGITFTLFTTPFFIRLFRKIGWGQFIRLDGPRQHAIKRGTPTMGGLVIVVASIISYFLANFFLGLSVEPSGLLVIFMFVGMSLVGFLDDILKVRKQHSGGLGPFYKVVLQSFIAVPFALLTFLVKDARGIPHSSMSISFARDTGINFSALFSLGIIGVFSAWILYLLWINLIAVSSVNAVNITDGLDGLAAGAMIFTMLAYVVIGFWQSGQNCARKSLPLENISKCYSVNGPLDMSILAAAILGSLLGFLWWNTNPSKIMMGDTGALALGGAAAALSILTHTQLLFLVLGGLFVIEAGSVILQIAFYKKYRRRIFLMSPLHHHFELKGWAEITVVVRFWIIAGLFTALGIGLFYADWLYS</sequence>
<proteinExistence type="inferred from homology"/>
<evidence type="ECO:0000255" key="1">
    <source>
        <dbReference type="HAMAP-Rule" id="MF_00038"/>
    </source>
</evidence>
<protein>
    <recommendedName>
        <fullName evidence="1">Phospho-N-acetylmuramoyl-pentapeptide-transferase</fullName>
        <ecNumber evidence="1">2.7.8.13</ecNumber>
    </recommendedName>
    <alternativeName>
        <fullName evidence="1">UDP-MurNAc-pentapeptide phosphotransferase</fullName>
    </alternativeName>
</protein>
<reference key="1">
    <citation type="journal article" date="2003" name="Genome Res.">
        <title>Tropheryma whipplei twist: a human pathogenic Actinobacteria with a reduced genome.</title>
        <authorList>
            <person name="Raoult D."/>
            <person name="Ogata H."/>
            <person name="Audic S."/>
            <person name="Robert C."/>
            <person name="Suhre K."/>
            <person name="Drancourt M."/>
            <person name="Claverie J.-M."/>
        </authorList>
    </citation>
    <scope>NUCLEOTIDE SEQUENCE [LARGE SCALE GENOMIC DNA]</scope>
    <source>
        <strain>Twist</strain>
    </source>
</reference>
<comment type="function">
    <text evidence="1">Catalyzes the initial step of the lipid cycle reactions in the biosynthesis of the cell wall peptidoglycan: transfers peptidoglycan precursor phospho-MurNAc-pentapeptide from UDP-MurNAc-pentapeptide onto the lipid carrier undecaprenyl phosphate, yielding undecaprenyl-pyrophosphoryl-MurNAc-pentapeptide, known as lipid I.</text>
</comment>
<comment type="catalytic activity">
    <reaction evidence="1">
        <text>UDP-N-acetyl-alpha-D-muramoyl-L-alanyl-gamma-D-glutamyl-meso-2,6-diaminopimeloyl-D-alanyl-D-alanine + di-trans,octa-cis-undecaprenyl phosphate = di-trans,octa-cis-undecaprenyl diphospho-N-acetyl-alpha-D-muramoyl-L-alanyl-D-glutamyl-meso-2,6-diaminopimeloyl-D-alanyl-D-alanine + UMP</text>
        <dbReference type="Rhea" id="RHEA:28386"/>
        <dbReference type="ChEBI" id="CHEBI:57865"/>
        <dbReference type="ChEBI" id="CHEBI:60392"/>
        <dbReference type="ChEBI" id="CHEBI:61386"/>
        <dbReference type="ChEBI" id="CHEBI:61387"/>
        <dbReference type="EC" id="2.7.8.13"/>
    </reaction>
</comment>
<comment type="cofactor">
    <cofactor evidence="1">
        <name>Mg(2+)</name>
        <dbReference type="ChEBI" id="CHEBI:18420"/>
    </cofactor>
</comment>
<comment type="pathway">
    <text evidence="1">Cell wall biogenesis; peptidoglycan biosynthesis.</text>
</comment>
<comment type="subcellular location">
    <subcellularLocation>
        <location evidence="1">Cell membrane</location>
        <topology evidence="1">Multi-pass membrane protein</topology>
    </subcellularLocation>
</comment>
<comment type="similarity">
    <text evidence="1">Belongs to the glycosyltransferase 4 family. MraY subfamily.</text>
</comment>
<accession>Q83GN4</accession>
<feature type="chain" id="PRO_0000108921" description="Phospho-N-acetylmuramoyl-pentapeptide-transferase">
    <location>
        <begin position="1"/>
        <end position="369"/>
    </location>
</feature>
<feature type="transmembrane region" description="Helical" evidence="1">
    <location>
        <begin position="2"/>
        <end position="22"/>
    </location>
</feature>
<feature type="transmembrane region" description="Helical" evidence="1">
    <location>
        <begin position="54"/>
        <end position="74"/>
    </location>
</feature>
<feature type="transmembrane region" description="Helical" evidence="1">
    <location>
        <begin position="80"/>
        <end position="100"/>
    </location>
</feature>
<feature type="transmembrane region" description="Helical" evidence="1">
    <location>
        <begin position="113"/>
        <end position="133"/>
    </location>
</feature>
<feature type="transmembrane region" description="Helical" evidence="1">
    <location>
        <begin position="158"/>
        <end position="178"/>
    </location>
</feature>
<feature type="transmembrane region" description="Helical" evidence="1">
    <location>
        <begin position="195"/>
        <end position="215"/>
    </location>
</feature>
<feature type="transmembrane region" description="Helical" evidence="1">
    <location>
        <begin position="241"/>
        <end position="261"/>
    </location>
</feature>
<feature type="transmembrane region" description="Helical" evidence="1">
    <location>
        <begin position="268"/>
        <end position="288"/>
    </location>
</feature>
<feature type="transmembrane region" description="Helical" evidence="1">
    <location>
        <begin position="293"/>
        <end position="313"/>
    </location>
</feature>
<feature type="transmembrane region" description="Helical" evidence="1">
    <location>
        <begin position="347"/>
        <end position="367"/>
    </location>
</feature>
<name>MRAY_TROWT</name>
<gene>
    <name evidence="1" type="primary">mraY</name>
    <name type="ordered locus">TWT_224</name>
</gene>
<organism>
    <name type="scientific">Tropheryma whipplei (strain Twist)</name>
    <name type="common">Whipple's bacillus</name>
    <dbReference type="NCBI Taxonomy" id="203267"/>
    <lineage>
        <taxon>Bacteria</taxon>
        <taxon>Bacillati</taxon>
        <taxon>Actinomycetota</taxon>
        <taxon>Actinomycetes</taxon>
        <taxon>Micrococcales</taxon>
        <taxon>Tropherymataceae</taxon>
        <taxon>Tropheryma</taxon>
    </lineage>
</organism>
<dbReference type="EC" id="2.7.8.13" evidence="1"/>
<dbReference type="EMBL" id="AE014184">
    <property type="protein sequence ID" value="AAO44321.1"/>
    <property type="molecule type" value="Genomic_DNA"/>
</dbReference>
<dbReference type="RefSeq" id="WP_011102440.1">
    <property type="nucleotide sequence ID" value="NC_004572.3"/>
</dbReference>
<dbReference type="SMR" id="Q83GN4"/>
<dbReference type="STRING" id="203267.TWT_224"/>
<dbReference type="KEGG" id="twh:TWT_224"/>
<dbReference type="eggNOG" id="COG0472">
    <property type="taxonomic scope" value="Bacteria"/>
</dbReference>
<dbReference type="HOGENOM" id="CLU_023982_0_0_11"/>
<dbReference type="OrthoDB" id="9805475at2"/>
<dbReference type="UniPathway" id="UPA00219"/>
<dbReference type="Proteomes" id="UP000002200">
    <property type="component" value="Chromosome"/>
</dbReference>
<dbReference type="GO" id="GO:0005886">
    <property type="term" value="C:plasma membrane"/>
    <property type="evidence" value="ECO:0007669"/>
    <property type="project" value="UniProtKB-SubCell"/>
</dbReference>
<dbReference type="GO" id="GO:0046872">
    <property type="term" value="F:metal ion binding"/>
    <property type="evidence" value="ECO:0007669"/>
    <property type="project" value="UniProtKB-KW"/>
</dbReference>
<dbReference type="GO" id="GO:0008963">
    <property type="term" value="F:phospho-N-acetylmuramoyl-pentapeptide-transferase activity"/>
    <property type="evidence" value="ECO:0007669"/>
    <property type="project" value="UniProtKB-UniRule"/>
</dbReference>
<dbReference type="GO" id="GO:0051992">
    <property type="term" value="F:UDP-N-acetylmuramoyl-L-alanyl-D-glutamyl-meso-2,6-diaminopimelyl-D-alanyl-D-alanine:undecaprenyl-phosphate transferase activity"/>
    <property type="evidence" value="ECO:0007669"/>
    <property type="project" value="RHEA"/>
</dbReference>
<dbReference type="GO" id="GO:0051301">
    <property type="term" value="P:cell division"/>
    <property type="evidence" value="ECO:0007669"/>
    <property type="project" value="UniProtKB-KW"/>
</dbReference>
<dbReference type="GO" id="GO:0071555">
    <property type="term" value="P:cell wall organization"/>
    <property type="evidence" value="ECO:0007669"/>
    <property type="project" value="UniProtKB-KW"/>
</dbReference>
<dbReference type="GO" id="GO:0009252">
    <property type="term" value="P:peptidoglycan biosynthetic process"/>
    <property type="evidence" value="ECO:0007669"/>
    <property type="project" value="UniProtKB-UniRule"/>
</dbReference>
<dbReference type="GO" id="GO:0008360">
    <property type="term" value="P:regulation of cell shape"/>
    <property type="evidence" value="ECO:0007669"/>
    <property type="project" value="UniProtKB-KW"/>
</dbReference>
<dbReference type="CDD" id="cd06852">
    <property type="entry name" value="GT_MraY"/>
    <property type="match status" value="1"/>
</dbReference>
<dbReference type="HAMAP" id="MF_00038">
    <property type="entry name" value="MraY"/>
    <property type="match status" value="1"/>
</dbReference>
<dbReference type="InterPro" id="IPR000715">
    <property type="entry name" value="Glycosyl_transferase_4"/>
</dbReference>
<dbReference type="InterPro" id="IPR003524">
    <property type="entry name" value="PNAcMuramoyl-5peptid_Trfase"/>
</dbReference>
<dbReference type="InterPro" id="IPR018480">
    <property type="entry name" value="PNAcMuramoyl-5peptid_Trfase_CS"/>
</dbReference>
<dbReference type="NCBIfam" id="TIGR00445">
    <property type="entry name" value="mraY"/>
    <property type="match status" value="1"/>
</dbReference>
<dbReference type="PANTHER" id="PTHR22926">
    <property type="entry name" value="PHOSPHO-N-ACETYLMURAMOYL-PENTAPEPTIDE-TRANSFERASE"/>
    <property type="match status" value="1"/>
</dbReference>
<dbReference type="PANTHER" id="PTHR22926:SF5">
    <property type="entry name" value="PHOSPHO-N-ACETYLMURAMOYL-PENTAPEPTIDE-TRANSFERASE HOMOLOG"/>
    <property type="match status" value="1"/>
</dbReference>
<dbReference type="Pfam" id="PF00953">
    <property type="entry name" value="Glycos_transf_4"/>
    <property type="match status" value="1"/>
</dbReference>
<dbReference type="Pfam" id="PF10555">
    <property type="entry name" value="MraY_sig1"/>
    <property type="match status" value="1"/>
</dbReference>
<dbReference type="PROSITE" id="PS01347">
    <property type="entry name" value="MRAY_1"/>
    <property type="match status" value="1"/>
</dbReference>
<dbReference type="PROSITE" id="PS01348">
    <property type="entry name" value="MRAY_2"/>
    <property type="match status" value="1"/>
</dbReference>